<evidence type="ECO:0000250" key="1">
    <source>
        <dbReference type="UniProtKB" id="P10614"/>
    </source>
</evidence>
<evidence type="ECO:0000250" key="2">
    <source>
        <dbReference type="UniProtKB" id="Q4WNT5"/>
    </source>
</evidence>
<evidence type="ECO:0000255" key="3"/>
<evidence type="ECO:0000269" key="4">
    <source>
    </source>
</evidence>
<evidence type="ECO:0000269" key="5">
    <source>
    </source>
</evidence>
<evidence type="ECO:0000269" key="6">
    <source>
    </source>
</evidence>
<evidence type="ECO:0000269" key="7">
    <source>
    </source>
</evidence>
<evidence type="ECO:0000269" key="8">
    <source>
    </source>
</evidence>
<evidence type="ECO:0000269" key="9">
    <source>
    </source>
</evidence>
<evidence type="ECO:0000269" key="10">
    <source>
    </source>
</evidence>
<evidence type="ECO:0000269" key="11">
    <source>
    </source>
</evidence>
<evidence type="ECO:0000269" key="12">
    <source>
    </source>
</evidence>
<evidence type="ECO:0000269" key="13">
    <source>
    </source>
</evidence>
<evidence type="ECO:0000269" key="14">
    <source>
    </source>
</evidence>
<evidence type="ECO:0000269" key="15">
    <source>
    </source>
</evidence>
<evidence type="ECO:0000269" key="16">
    <source>
    </source>
</evidence>
<evidence type="ECO:0000269" key="17">
    <source>
    </source>
</evidence>
<evidence type="ECO:0000269" key="18">
    <source>
    </source>
</evidence>
<evidence type="ECO:0000269" key="19">
    <source>
    </source>
</evidence>
<evidence type="ECO:0000269" key="20">
    <source>
    </source>
</evidence>
<evidence type="ECO:0000303" key="21">
    <source>
    </source>
</evidence>
<evidence type="ECO:0000303" key="22">
    <source>
    </source>
</evidence>
<evidence type="ECO:0000303" key="23">
    <source>
    </source>
</evidence>
<evidence type="ECO:0000303" key="24">
    <source>
    </source>
</evidence>
<evidence type="ECO:0000303" key="25">
    <source>
    </source>
</evidence>
<evidence type="ECO:0000305" key="26"/>
<evidence type="ECO:0000305" key="27">
    <source>
    </source>
</evidence>
<evidence type="ECO:0007744" key="28">
    <source>
        <dbReference type="PDB" id="5FSA"/>
    </source>
</evidence>
<evidence type="ECO:0007744" key="29">
    <source>
        <dbReference type="PDB" id="5TZ1"/>
    </source>
</evidence>
<evidence type="ECO:0007744" key="30">
    <source>
        <dbReference type="PDB" id="5V5Z"/>
    </source>
</evidence>
<evidence type="ECO:0007829" key="31">
    <source>
        <dbReference type="PDB" id="5FSA"/>
    </source>
</evidence>
<evidence type="ECO:0007829" key="32">
    <source>
        <dbReference type="PDB" id="5TZ1"/>
    </source>
</evidence>
<evidence type="ECO:0007829" key="33">
    <source>
        <dbReference type="PDB" id="5V5Z"/>
    </source>
</evidence>
<organism>
    <name type="scientific">Candida albicans (strain SC5314 / ATCC MYA-2876)</name>
    <name type="common">Yeast</name>
    <dbReference type="NCBI Taxonomy" id="237561"/>
    <lineage>
        <taxon>Eukaryota</taxon>
        <taxon>Fungi</taxon>
        <taxon>Dikarya</taxon>
        <taxon>Ascomycota</taxon>
        <taxon>Saccharomycotina</taxon>
        <taxon>Pichiomycetes</taxon>
        <taxon>Debaryomycetaceae</taxon>
        <taxon>Candida/Lodderomyces clade</taxon>
        <taxon>Candida</taxon>
    </lineage>
</organism>
<gene>
    <name evidence="22" type="primary">ERG11</name>
    <name evidence="21" type="synonym">CYP51</name>
    <name type="synonym">ERG16</name>
    <name type="ordered locus">CAALFM_C500660CA</name>
    <name type="ORF">CaO19.922</name>
</gene>
<comment type="function">
    <text evidence="1 2 5 12 15 20">Sterol 14alpha-demethylase that plays a critical role in the third module of ergosterol biosynthesis pathway, being ergosterol the major sterol component in fungal membranes that participates in a variety of functions (PubMed:10393548, PubMed:28258218, PubMed:8647850, PubMed:9559662). The third module or late pathway involves the ergosterol synthesis itself through consecutive reactions that mainly occur in the endoplasmic reticulum (ER) membrane (By similarity). In filamentous fungi, during the initial step of this module, lanosterol (lanosta-8,24-dien-3beta-ol) can be metabolized to eburicol (By similarity). Sterol 14alpha-demethylase catalyzes the three-step oxidative removal of the 14alpha-methyl group (C-32) of both these sterols in the form of formate, and converts eburicol and lanosterol to 14-demethyleburicol (4,4,24-trimethylergosta-8,14,24(28)-trienol) and 4,4-dimethyl-5alpha-cholesta-8,14,24-trien-3beta-ol, respectively, which are further metabolized by other enzymes in the pathway to ergosterol (PubMed:10393548, PubMed:28258218, PubMed:8647850, PubMed:9559662). Can also use substrates not intrinsic to fungi, such as 24,25-dihydrolanosterol (DHL), producing 4,4-dimethyl-8,14-cholestadien-3-beta-ol, but at lower rates than the endogenous substrates (By similarity).</text>
</comment>
<comment type="catalytic activity">
    <reaction evidence="5 12 15 20">
        <text>a 14alpha-methyl steroid + 3 reduced [NADPH--hemoprotein reductase] + 3 O2 = a Delta(14) steroid + formate + 3 oxidized [NADPH--hemoprotein reductase] + 4 H2O + 4 H(+)</text>
        <dbReference type="Rhea" id="RHEA:54028"/>
        <dbReference type="Rhea" id="RHEA-COMP:11964"/>
        <dbReference type="Rhea" id="RHEA-COMP:11965"/>
        <dbReference type="ChEBI" id="CHEBI:15377"/>
        <dbReference type="ChEBI" id="CHEBI:15378"/>
        <dbReference type="ChEBI" id="CHEBI:15379"/>
        <dbReference type="ChEBI" id="CHEBI:15740"/>
        <dbReference type="ChEBI" id="CHEBI:57618"/>
        <dbReference type="ChEBI" id="CHEBI:58210"/>
        <dbReference type="ChEBI" id="CHEBI:138029"/>
        <dbReference type="ChEBI" id="CHEBI:138031"/>
        <dbReference type="EC" id="1.14.14.154"/>
    </reaction>
    <physiologicalReaction direction="left-to-right" evidence="5 12 15 27">
        <dbReference type="Rhea" id="RHEA:54029"/>
    </physiologicalReaction>
</comment>
<comment type="catalytic activity">
    <reaction evidence="1">
        <text>a 14alpha-methyl steroid + reduced [NADPH--hemoprotein reductase] + O2 = a 14alpha-hydroxymethyl steroid + oxidized [NADPH--hemoprotein reductase] + H2O + H(+)</text>
        <dbReference type="Rhea" id="RHEA:68060"/>
        <dbReference type="Rhea" id="RHEA-COMP:11964"/>
        <dbReference type="Rhea" id="RHEA-COMP:11965"/>
        <dbReference type="ChEBI" id="CHEBI:15377"/>
        <dbReference type="ChEBI" id="CHEBI:15378"/>
        <dbReference type="ChEBI" id="CHEBI:15379"/>
        <dbReference type="ChEBI" id="CHEBI:57618"/>
        <dbReference type="ChEBI" id="CHEBI:58210"/>
        <dbReference type="ChEBI" id="CHEBI:138029"/>
        <dbReference type="ChEBI" id="CHEBI:176901"/>
    </reaction>
    <physiologicalReaction direction="left-to-right" evidence="1">
        <dbReference type="Rhea" id="RHEA:68061"/>
    </physiologicalReaction>
</comment>
<comment type="catalytic activity">
    <reaction evidence="1">
        <text>a 14alpha-hydroxymethyl steroid + reduced [NADPH--hemoprotein reductase] + O2 = a 14alpha-formyl steroid + oxidized [NADPH--hemoprotein reductase] + 2 H2O + H(+)</text>
        <dbReference type="Rhea" id="RHEA:68064"/>
        <dbReference type="Rhea" id="RHEA-COMP:11964"/>
        <dbReference type="Rhea" id="RHEA-COMP:11965"/>
        <dbReference type="ChEBI" id="CHEBI:15377"/>
        <dbReference type="ChEBI" id="CHEBI:15378"/>
        <dbReference type="ChEBI" id="CHEBI:15379"/>
        <dbReference type="ChEBI" id="CHEBI:57618"/>
        <dbReference type="ChEBI" id="CHEBI:58210"/>
        <dbReference type="ChEBI" id="CHEBI:176901"/>
        <dbReference type="ChEBI" id="CHEBI:176902"/>
    </reaction>
    <physiologicalReaction direction="left-to-right" evidence="1">
        <dbReference type="Rhea" id="RHEA:68065"/>
    </physiologicalReaction>
</comment>
<comment type="catalytic activity">
    <reaction evidence="1">
        <text>a 14alpha-formyl steroid + reduced [NADPH--hemoprotein reductase] + O2 = a Delta(14) steroid + formate + oxidized [NADPH--hemoprotein reductase] + H2O + 2 H(+)</text>
        <dbReference type="Rhea" id="RHEA:68068"/>
        <dbReference type="Rhea" id="RHEA-COMP:11964"/>
        <dbReference type="Rhea" id="RHEA-COMP:11965"/>
        <dbReference type="ChEBI" id="CHEBI:15377"/>
        <dbReference type="ChEBI" id="CHEBI:15378"/>
        <dbReference type="ChEBI" id="CHEBI:15379"/>
        <dbReference type="ChEBI" id="CHEBI:15740"/>
        <dbReference type="ChEBI" id="CHEBI:57618"/>
        <dbReference type="ChEBI" id="CHEBI:58210"/>
        <dbReference type="ChEBI" id="CHEBI:138031"/>
        <dbReference type="ChEBI" id="CHEBI:176902"/>
    </reaction>
    <physiologicalReaction direction="left-to-right" evidence="1">
        <dbReference type="Rhea" id="RHEA:68069"/>
    </physiologicalReaction>
</comment>
<comment type="catalytic activity">
    <reaction evidence="5 12 15 20">
        <text>lanosterol + 3 reduced [NADPH--hemoprotein reductase] + 3 O2 = 4,4-dimethyl-5alpha-cholesta-8,14,24-trien-3beta-ol + formate + 3 oxidized [NADPH--hemoprotein reductase] + 4 H2O + 4 H(+)</text>
        <dbReference type="Rhea" id="RHEA:25286"/>
        <dbReference type="Rhea" id="RHEA-COMP:11964"/>
        <dbReference type="Rhea" id="RHEA-COMP:11965"/>
        <dbReference type="ChEBI" id="CHEBI:15377"/>
        <dbReference type="ChEBI" id="CHEBI:15378"/>
        <dbReference type="ChEBI" id="CHEBI:15379"/>
        <dbReference type="ChEBI" id="CHEBI:15740"/>
        <dbReference type="ChEBI" id="CHEBI:16521"/>
        <dbReference type="ChEBI" id="CHEBI:17813"/>
        <dbReference type="ChEBI" id="CHEBI:57618"/>
        <dbReference type="ChEBI" id="CHEBI:58210"/>
        <dbReference type="EC" id="1.14.14.154"/>
    </reaction>
    <physiologicalReaction direction="left-to-right" evidence="5 12 15 27">
        <dbReference type="Rhea" id="RHEA:25287"/>
    </physiologicalReaction>
</comment>
<comment type="catalytic activity">
    <reaction evidence="1">
        <text>lanosterol + reduced [NADPH--hemoprotein reductase] + O2 = 32-hydroxylanosterol + oxidized [NADPH--hemoprotein reductase] + H2O + H(+)</text>
        <dbReference type="Rhea" id="RHEA:75103"/>
        <dbReference type="Rhea" id="RHEA-COMP:11964"/>
        <dbReference type="Rhea" id="RHEA-COMP:11965"/>
        <dbReference type="ChEBI" id="CHEBI:15377"/>
        <dbReference type="ChEBI" id="CHEBI:15378"/>
        <dbReference type="ChEBI" id="CHEBI:15379"/>
        <dbReference type="ChEBI" id="CHEBI:16521"/>
        <dbReference type="ChEBI" id="CHEBI:57618"/>
        <dbReference type="ChEBI" id="CHEBI:58210"/>
        <dbReference type="ChEBI" id="CHEBI:166806"/>
    </reaction>
    <physiologicalReaction direction="left-to-right" evidence="1">
        <dbReference type="Rhea" id="RHEA:75104"/>
    </physiologicalReaction>
</comment>
<comment type="catalytic activity">
    <reaction evidence="1">
        <text>32-hydroxylanosterol + reduced [NADPH--hemoprotein reductase] + O2 = 32-oxolanosterol + oxidized [NADPH--hemoprotein reductase] + 2 H2O + H(+)</text>
        <dbReference type="Rhea" id="RHEA:75107"/>
        <dbReference type="Rhea" id="RHEA-COMP:11964"/>
        <dbReference type="Rhea" id="RHEA-COMP:11965"/>
        <dbReference type="ChEBI" id="CHEBI:15377"/>
        <dbReference type="ChEBI" id="CHEBI:15378"/>
        <dbReference type="ChEBI" id="CHEBI:15379"/>
        <dbReference type="ChEBI" id="CHEBI:57618"/>
        <dbReference type="ChEBI" id="CHEBI:58210"/>
        <dbReference type="ChEBI" id="CHEBI:166681"/>
        <dbReference type="ChEBI" id="CHEBI:166806"/>
    </reaction>
    <physiologicalReaction direction="left-to-right" evidence="1">
        <dbReference type="Rhea" id="RHEA:75108"/>
    </physiologicalReaction>
</comment>
<comment type="catalytic activity">
    <reaction evidence="1">
        <text>32-oxolanosterol + reduced [NADPH--hemoprotein reductase] + O2 = 4,4-dimethyl-5alpha-cholesta-8,14,24-trien-3beta-ol + formate + oxidized [NADPH--hemoprotein reductase] + H2O + 2 H(+)</text>
        <dbReference type="Rhea" id="RHEA:75111"/>
        <dbReference type="Rhea" id="RHEA-COMP:11964"/>
        <dbReference type="Rhea" id="RHEA-COMP:11965"/>
        <dbReference type="ChEBI" id="CHEBI:15377"/>
        <dbReference type="ChEBI" id="CHEBI:15378"/>
        <dbReference type="ChEBI" id="CHEBI:15379"/>
        <dbReference type="ChEBI" id="CHEBI:15740"/>
        <dbReference type="ChEBI" id="CHEBI:17813"/>
        <dbReference type="ChEBI" id="CHEBI:57618"/>
        <dbReference type="ChEBI" id="CHEBI:58210"/>
        <dbReference type="ChEBI" id="CHEBI:166681"/>
    </reaction>
    <physiologicalReaction direction="left-to-right" evidence="1">
        <dbReference type="Rhea" id="RHEA:75112"/>
    </physiologicalReaction>
</comment>
<comment type="catalytic activity">
    <reaction evidence="20">
        <text>eburicol + 3 reduced [NADPH--hemoprotein reductase] + 3 O2 = 14-demethyleburicol + formate + 3 oxidized [NADPH--hemoprotein reductase] + 4 H2O + 4 H(+)</text>
        <dbReference type="Rhea" id="RHEA:75439"/>
        <dbReference type="Rhea" id="RHEA-COMP:11964"/>
        <dbReference type="Rhea" id="RHEA-COMP:11965"/>
        <dbReference type="ChEBI" id="CHEBI:15377"/>
        <dbReference type="ChEBI" id="CHEBI:15378"/>
        <dbReference type="ChEBI" id="CHEBI:15379"/>
        <dbReference type="ChEBI" id="CHEBI:15740"/>
        <dbReference type="ChEBI" id="CHEBI:57618"/>
        <dbReference type="ChEBI" id="CHEBI:58210"/>
        <dbReference type="ChEBI" id="CHEBI:70315"/>
        <dbReference type="ChEBI" id="CHEBI:194330"/>
    </reaction>
    <physiologicalReaction direction="left-to-right" evidence="27">
        <dbReference type="Rhea" id="RHEA:75440"/>
    </physiologicalReaction>
</comment>
<comment type="catalytic activity">
    <reaction evidence="1">
        <text>eburicol + reduced [NADPH--hemoprotein reductase] + O2 = 32-hydroxyeburicol + oxidized [NADPH--hemoprotein reductase] + H2O + H(+)</text>
        <dbReference type="Rhea" id="RHEA:75427"/>
        <dbReference type="Rhea" id="RHEA-COMP:11964"/>
        <dbReference type="Rhea" id="RHEA-COMP:11965"/>
        <dbReference type="ChEBI" id="CHEBI:15377"/>
        <dbReference type="ChEBI" id="CHEBI:15378"/>
        <dbReference type="ChEBI" id="CHEBI:15379"/>
        <dbReference type="ChEBI" id="CHEBI:57618"/>
        <dbReference type="ChEBI" id="CHEBI:58210"/>
        <dbReference type="ChEBI" id="CHEBI:70315"/>
        <dbReference type="ChEBI" id="CHEBI:194328"/>
    </reaction>
    <physiologicalReaction direction="left-to-right" evidence="1">
        <dbReference type="Rhea" id="RHEA:75428"/>
    </physiologicalReaction>
</comment>
<comment type="catalytic activity">
    <reaction evidence="1">
        <text>32-hydroxyeburicol + reduced [NADPH--hemoprotein reductase] + O2 = 32-oxoeburicol + oxidized [NADPH--hemoprotein reductase] + 2 H2O + H(+)</text>
        <dbReference type="Rhea" id="RHEA:75431"/>
        <dbReference type="Rhea" id="RHEA-COMP:11964"/>
        <dbReference type="Rhea" id="RHEA-COMP:11965"/>
        <dbReference type="ChEBI" id="CHEBI:15377"/>
        <dbReference type="ChEBI" id="CHEBI:15378"/>
        <dbReference type="ChEBI" id="CHEBI:15379"/>
        <dbReference type="ChEBI" id="CHEBI:57618"/>
        <dbReference type="ChEBI" id="CHEBI:58210"/>
        <dbReference type="ChEBI" id="CHEBI:194328"/>
        <dbReference type="ChEBI" id="CHEBI:194329"/>
    </reaction>
    <physiologicalReaction direction="left-to-right" evidence="1">
        <dbReference type="Rhea" id="RHEA:75432"/>
    </physiologicalReaction>
</comment>
<comment type="catalytic activity">
    <reaction evidence="1">
        <text>32-oxoeburicol + reduced [NADPH--hemoprotein reductase] + O2 = 14-demethyleburicol + formate + oxidized [NADPH--hemoprotein reductase] + H2O + 2 H(+)</text>
        <dbReference type="Rhea" id="RHEA:75435"/>
        <dbReference type="Rhea" id="RHEA-COMP:11964"/>
        <dbReference type="Rhea" id="RHEA-COMP:11965"/>
        <dbReference type="ChEBI" id="CHEBI:15377"/>
        <dbReference type="ChEBI" id="CHEBI:15378"/>
        <dbReference type="ChEBI" id="CHEBI:15379"/>
        <dbReference type="ChEBI" id="CHEBI:15740"/>
        <dbReference type="ChEBI" id="CHEBI:57618"/>
        <dbReference type="ChEBI" id="CHEBI:58210"/>
        <dbReference type="ChEBI" id="CHEBI:194329"/>
        <dbReference type="ChEBI" id="CHEBI:194330"/>
    </reaction>
    <physiologicalReaction direction="left-to-right" evidence="1">
        <dbReference type="Rhea" id="RHEA:75436"/>
    </physiologicalReaction>
</comment>
<comment type="cofactor">
    <cofactor evidence="12 13">
        <name>heme</name>
        <dbReference type="ChEBI" id="CHEBI:30413"/>
    </cofactor>
</comment>
<comment type="activity regulation">
    <text evidence="8 11 12 14 16">The catalytic activity is inhibited by the binding of azoles clotrimazole, miconazole, fluconazole, ketoconazole, oteseconazole (VT-1161), tetraconazole, the triazole SCH39304, and the triazole derivative ICI 153066.</text>
</comment>
<comment type="biophysicochemical properties">
    <kinetics>
        <KM evidence="20">15 uM for lanosterol</KM>
        <KM evidence="12">6.3 uM for lanosterol</KM>
        <KM evidence="20">25 uM for 24,25-dihydrolanosterol</KM>
        <KM evidence="20">11 uM for eburicol</KM>
        <KM evidence="20">28.5 uM for obtusifoliol</KM>
        <Vmax evidence="20">0.25 nmol/min/nmol enzyme towards lanosterol</Vmax>
        <Vmax evidence="20">0.12 nmol/min/nmol enzyme towards 24,25-dihydrolanosterol</Vmax>
        <Vmax evidence="20">0.3 nmol/min/nmol enzyme towards eburicol</Vmax>
        <Vmax evidence="20">0.26 nmol/min/nmol enzyme towards obtusifoliol</Vmax>
    </kinetics>
</comment>
<comment type="pathway">
    <text evidence="12 15">Steroid biosynthesis; zymosterol biosynthesis; zymosterol from lanosterol: step 1/6.</text>
</comment>
<comment type="subcellular location">
    <subcellularLocation>
        <location evidence="26">Endoplasmic reticulum membrane</location>
        <topology evidence="3">Single-pass membrane protein</topology>
    </subcellularLocation>
</comment>
<comment type="induction">
    <text evidence="9 10">Induced after prolonged growth with antifungal drugs such as clotrimazole, miconazole, fluconazole, itraconazole, ketoconazole, terbinafine and fenpropimorph.</text>
</comment>
<comment type="similarity">
    <text evidence="26">Belongs to the cytochrome P450 family.</text>
</comment>
<sequence>MAIVETVIDGINYFLSLSVTQQISILLGVPFVYNLVWQYLYSLRKDRAPLVFYWIPWFGSAASYGQQPYEFFESCRQKYGDVFSFMLLGKIMTVYLGPKGHEFVFNAKLSDVSAEDAYKHLTTPVFGKGVIYDCPNSRLMEQKKFAKFALTTDSFKRYVPKIREEILNYFVTDESFKLKEKTHGVANVMKTQPEITIFTASRSLFGDEMRRIFDRSFAQLYSDLDKGFTPINFVFPNLPLPHYWRRDAAQKKISATYMKEIKSRRERGDIDPNRDLIDSLLIHSTYKDGVKMTDQEIANLLIGILMGGQHTSASTSAWFLLHLGEKPHLQDVIYQEVVELLKEKGGDLNDLTYEDLQKLPSVNNTIKETLRMHMPLHSIFRKVTNPLRIPETNYIVPKGHYVLVSPGYAHTSERYFDNPEDFDPTRWDTAAAKANSVSFNSSDEVDYGFGKVSKGVSSPYLPFGGGRHRCIGEQFAYVQLGTILTTFVYNLRWTIDGYKVPDPDYSSMVVLPTEPAEIIWEKRETCMF</sequence>
<protein>
    <recommendedName>
        <fullName evidence="24">Lanosterol 14-alpha demethylase</fullName>
        <shortName evidence="25">LDM</shortName>
        <ecNumber evidence="12 15">1.14.14.154</ecNumber>
    </recommendedName>
    <alternativeName>
        <fullName evidence="21">Cytochrome P450 51</fullName>
    </alternativeName>
    <alternativeName>
        <fullName evidence="23">Cytochrome P450-14DM</fullName>
    </alternativeName>
    <alternativeName>
        <fullName evidence="24">Cytochrome P450-LIA1</fullName>
        <shortName evidence="24">CYPLI</shortName>
    </alternativeName>
    <alternativeName>
        <fullName evidence="22">Ergosterol biosynthesis protein 11</fullName>
    </alternativeName>
    <alternativeName>
        <fullName evidence="23">Sterol 14-alpha demethylase</fullName>
    </alternativeName>
</protein>
<name>CP51_CANAL</name>
<proteinExistence type="evidence at protein level"/>
<dbReference type="EC" id="1.14.14.154" evidence="12 15"/>
<dbReference type="EMBL" id="X13296">
    <property type="protein sequence ID" value="CAA31658.1"/>
    <property type="molecule type" value="Genomic_DNA"/>
</dbReference>
<dbReference type="EMBL" id="EU819548">
    <property type="protein sequence ID" value="ACF34636.1"/>
    <property type="molecule type" value="Genomic_DNA"/>
</dbReference>
<dbReference type="EMBL" id="EU819551">
    <property type="protein sequence ID" value="ACF34639.1"/>
    <property type="molecule type" value="Genomic_DNA"/>
</dbReference>
<dbReference type="EMBL" id="FJ002303">
    <property type="protein sequence ID" value="ACH91036.1"/>
    <property type="molecule type" value="Genomic_DNA"/>
</dbReference>
<dbReference type="EMBL" id="FJ403378">
    <property type="protein sequence ID" value="ACJ23064.1"/>
    <property type="molecule type" value="Genomic_DNA"/>
</dbReference>
<dbReference type="EMBL" id="CP017627">
    <property type="protein sequence ID" value="AOW29509.1"/>
    <property type="molecule type" value="Genomic_DNA"/>
</dbReference>
<dbReference type="EMBL" id="U67192">
    <property type="protein sequence ID" value="AAB08099.1"/>
    <property type="molecule type" value="Genomic_DNA"/>
</dbReference>
<dbReference type="EMBL" id="U67193">
    <property type="protein sequence ID" value="AAB08100.1"/>
    <property type="molecule type" value="Genomic_DNA"/>
</dbReference>
<dbReference type="PIR" id="S02713">
    <property type="entry name" value="O4CK51"/>
</dbReference>
<dbReference type="RefSeq" id="XP_716761.1">
    <property type="nucleotide sequence ID" value="XM_711668.2"/>
</dbReference>
<dbReference type="PDB" id="5FSA">
    <property type="method" value="X-ray"/>
    <property type="resolution" value="2.86 A"/>
    <property type="chains" value="A/B=49-528"/>
</dbReference>
<dbReference type="PDB" id="5TZ1">
    <property type="method" value="X-ray"/>
    <property type="resolution" value="2.00 A"/>
    <property type="chains" value="A/B=48-528"/>
</dbReference>
<dbReference type="PDB" id="5V5Z">
    <property type="method" value="X-ray"/>
    <property type="resolution" value="2.90 A"/>
    <property type="chains" value="A=1-528"/>
</dbReference>
<dbReference type="PDBsum" id="5FSA"/>
<dbReference type="PDBsum" id="5TZ1"/>
<dbReference type="PDBsum" id="5V5Z"/>
<dbReference type="SMR" id="P10613"/>
<dbReference type="FunCoup" id="P10613">
    <property type="interactions" value="599"/>
</dbReference>
<dbReference type="STRING" id="237561.P10613"/>
<dbReference type="BindingDB" id="P10613"/>
<dbReference type="ChEMBL" id="CHEMBL1780"/>
<dbReference type="ChEMBL" id="CHEMBL4662933"/>
<dbReference type="DrugBank" id="DB06395">
    <property type="generic name" value="Abafungin"/>
</dbReference>
<dbReference type="DrugBank" id="DB04794">
    <property type="generic name" value="Bifonazole"/>
</dbReference>
<dbReference type="DrugBank" id="DB00639">
    <property type="generic name" value="Butoconazole"/>
</dbReference>
<dbReference type="DrugBank" id="DB14547">
    <property type="generic name" value="Chloride ion"/>
</dbReference>
<dbReference type="DrugBank" id="DB04272">
    <property type="generic name" value="Citric acid"/>
</dbReference>
<dbReference type="DrugBank" id="DB00257">
    <property type="generic name" value="Clotrimazole"/>
</dbReference>
<dbReference type="DrugBank" id="DB03383">
    <property type="generic name" value="CP-320626"/>
</dbReference>
<dbReference type="DrugBank" id="DB01127">
    <property type="generic name" value="Econazole"/>
</dbReference>
<dbReference type="DrugBank" id="DB09040">
    <property type="generic name" value="Efinaconazole"/>
</dbReference>
<dbReference type="DrugBank" id="DB00196">
    <property type="generic name" value="Fluconazole"/>
</dbReference>
<dbReference type="DrugBank" id="DB01167">
    <property type="generic name" value="Itraconazole"/>
</dbReference>
<dbReference type="DrugBank" id="DB01026">
    <property type="generic name" value="Ketoconazole"/>
</dbReference>
<dbReference type="DrugBank" id="DB08933">
    <property type="generic name" value="Luliconazole"/>
</dbReference>
<dbReference type="DrugBank" id="DB01110">
    <property type="generic name" value="Miconazole"/>
</dbReference>
<dbReference type="DrugBank" id="DB13055">
    <property type="generic name" value="Oteseconazole"/>
</dbReference>
<dbReference type="DrugBank" id="DB00239">
    <property type="generic name" value="Oxiconazole"/>
</dbReference>
<dbReference type="DrugBank" id="DB01263">
    <property type="generic name" value="Posaconazole"/>
</dbReference>
<dbReference type="DrugBank" id="DB06295">
    <property type="generic name" value="Pramiconazole"/>
</dbReference>
<dbReference type="DrugBank" id="DB01153">
    <property type="generic name" value="Sertaconazole"/>
</dbReference>
<dbReference type="DrugBank" id="DB00251">
    <property type="generic name" value="Terconazole"/>
</dbReference>
<dbReference type="DrugBank" id="DB01007">
    <property type="generic name" value="Tioconazole"/>
</dbReference>
<dbReference type="DrugBank" id="DB00582">
    <property type="generic name" value="Voriconazole"/>
</dbReference>
<dbReference type="DrugBank" id="DB17757">
    <property type="generic name" value="VT-1598"/>
</dbReference>
<dbReference type="DrugCentral" id="P10613"/>
<dbReference type="EnsemblFungi" id="C5_00660C_A-T">
    <property type="protein sequence ID" value="C5_00660C_A-T-p1"/>
    <property type="gene ID" value="C5_00660C_A"/>
</dbReference>
<dbReference type="GeneID" id="3641571"/>
<dbReference type="KEGG" id="cal:CAALFM_C500660CA"/>
<dbReference type="CGD" id="CAL0000176310">
    <property type="gene designation" value="ERG11"/>
</dbReference>
<dbReference type="VEuPathDB" id="FungiDB:C5_00660C_A"/>
<dbReference type="eggNOG" id="KOG0684">
    <property type="taxonomic scope" value="Eukaryota"/>
</dbReference>
<dbReference type="HOGENOM" id="CLU_001570_15_0_1"/>
<dbReference type="InParanoid" id="P10613"/>
<dbReference type="OrthoDB" id="1055148at2759"/>
<dbReference type="BRENDA" id="1.14.13.70">
    <property type="organism ID" value="11936"/>
</dbReference>
<dbReference type="BRENDA" id="1.14.14.154">
    <property type="organism ID" value="1096"/>
</dbReference>
<dbReference type="SABIO-RK" id="P10613"/>
<dbReference type="UniPathway" id="UPA00770">
    <property type="reaction ID" value="UER00754"/>
</dbReference>
<dbReference type="PHI-base" id="PHI:10625"/>
<dbReference type="PHI-base" id="PHI:11160"/>
<dbReference type="PHI-base" id="PHI:8030"/>
<dbReference type="PHI-base" id="PHI:8187"/>
<dbReference type="PRO" id="PR:P10613"/>
<dbReference type="Proteomes" id="UP000000559">
    <property type="component" value="Chromosome 5"/>
</dbReference>
<dbReference type="GO" id="GO:0032541">
    <property type="term" value="C:cortical endoplasmic reticulum"/>
    <property type="evidence" value="ECO:0007669"/>
    <property type="project" value="EnsemblFungi"/>
</dbReference>
<dbReference type="GO" id="GO:0005789">
    <property type="term" value="C:endoplasmic reticulum membrane"/>
    <property type="evidence" value="ECO:0007669"/>
    <property type="project" value="UniProtKB-SubCell"/>
</dbReference>
<dbReference type="GO" id="GO:0016020">
    <property type="term" value="C:membrane"/>
    <property type="evidence" value="ECO:0000314"/>
    <property type="project" value="CGD"/>
</dbReference>
<dbReference type="GO" id="GO:0097038">
    <property type="term" value="C:perinuclear endoplasmic reticulum"/>
    <property type="evidence" value="ECO:0007669"/>
    <property type="project" value="EnsemblFungi"/>
</dbReference>
<dbReference type="GO" id="GO:0005886">
    <property type="term" value="C:plasma membrane"/>
    <property type="evidence" value="ECO:0000314"/>
    <property type="project" value="CGD"/>
</dbReference>
<dbReference type="GO" id="GO:0020037">
    <property type="term" value="F:heme binding"/>
    <property type="evidence" value="ECO:0007669"/>
    <property type="project" value="InterPro"/>
</dbReference>
<dbReference type="GO" id="GO:0005506">
    <property type="term" value="F:iron ion binding"/>
    <property type="evidence" value="ECO:0007669"/>
    <property type="project" value="InterPro"/>
</dbReference>
<dbReference type="GO" id="GO:0016491">
    <property type="term" value="F:oxidoreductase activity"/>
    <property type="evidence" value="ECO:0000318"/>
    <property type="project" value="GO_Central"/>
</dbReference>
<dbReference type="GO" id="GO:0008398">
    <property type="term" value="F:sterol 14-demethylase activity"/>
    <property type="evidence" value="ECO:0000314"/>
    <property type="project" value="CGD"/>
</dbReference>
<dbReference type="GO" id="GO:0036187">
    <property type="term" value="P:cell growth mode switching, budding to filamentous"/>
    <property type="evidence" value="ECO:0000315"/>
    <property type="project" value="CGD"/>
</dbReference>
<dbReference type="GO" id="GO:0007032">
    <property type="term" value="P:endosome organization"/>
    <property type="evidence" value="ECO:0000315"/>
    <property type="project" value="CGD"/>
</dbReference>
<dbReference type="GO" id="GO:0006696">
    <property type="term" value="P:ergosterol biosynthetic process"/>
    <property type="evidence" value="ECO:0000316"/>
    <property type="project" value="CGD"/>
</dbReference>
<dbReference type="GO" id="GO:0001766">
    <property type="term" value="P:membrane raft polarization"/>
    <property type="evidence" value="ECO:0000315"/>
    <property type="project" value="CGD"/>
</dbReference>
<dbReference type="CDD" id="cd11042">
    <property type="entry name" value="CYP51-like"/>
    <property type="match status" value="1"/>
</dbReference>
<dbReference type="FunFam" id="1.10.630.10:FF:000033">
    <property type="entry name" value="14-alpha sterol demethylase"/>
    <property type="match status" value="1"/>
</dbReference>
<dbReference type="Gene3D" id="1.10.630.10">
    <property type="entry name" value="Cytochrome P450"/>
    <property type="match status" value="1"/>
</dbReference>
<dbReference type="InterPro" id="IPR050529">
    <property type="entry name" value="CYP450_sterol_14alpha_dmase"/>
</dbReference>
<dbReference type="InterPro" id="IPR001128">
    <property type="entry name" value="Cyt_P450"/>
</dbReference>
<dbReference type="InterPro" id="IPR017972">
    <property type="entry name" value="Cyt_P450_CS"/>
</dbReference>
<dbReference type="InterPro" id="IPR002403">
    <property type="entry name" value="Cyt_P450_E_grp-IV"/>
</dbReference>
<dbReference type="InterPro" id="IPR036396">
    <property type="entry name" value="Cyt_P450_sf"/>
</dbReference>
<dbReference type="PANTHER" id="PTHR24304:SF2">
    <property type="entry name" value="24-HYDROXYCHOLESTEROL 7-ALPHA-HYDROXYLASE"/>
    <property type="match status" value="1"/>
</dbReference>
<dbReference type="PANTHER" id="PTHR24304">
    <property type="entry name" value="CYTOCHROME P450 FAMILY 7"/>
    <property type="match status" value="1"/>
</dbReference>
<dbReference type="Pfam" id="PF00067">
    <property type="entry name" value="p450"/>
    <property type="match status" value="1"/>
</dbReference>
<dbReference type="PRINTS" id="PR00465">
    <property type="entry name" value="EP450IV"/>
</dbReference>
<dbReference type="PRINTS" id="PR00385">
    <property type="entry name" value="P450"/>
</dbReference>
<dbReference type="SUPFAM" id="SSF48264">
    <property type="entry name" value="Cytochrome P450"/>
    <property type="match status" value="1"/>
</dbReference>
<dbReference type="PROSITE" id="PS00086">
    <property type="entry name" value="CYTOCHROME_P450"/>
    <property type="match status" value="1"/>
</dbReference>
<feature type="chain" id="PRO_0000052003" description="Lanosterol 14-alpha demethylase">
    <location>
        <begin position="1"/>
        <end position="528"/>
    </location>
</feature>
<feature type="transmembrane region" description="Helical" evidence="3">
    <location>
        <begin position="15"/>
        <end position="37"/>
    </location>
</feature>
<feature type="binding site" evidence="29">
    <location>
        <position position="64"/>
    </location>
    <ligand>
        <name>oteseconazole</name>
        <dbReference type="ChEBI" id="CHEBI:188153"/>
        <note>inhibitor</note>
    </ligand>
</feature>
<feature type="binding site" evidence="30">
    <location>
        <position position="118"/>
    </location>
    <ligand>
        <name>itraconazole</name>
        <dbReference type="ChEBI" id="CHEBI:6076"/>
        <note>inhibitor</note>
    </ligand>
</feature>
<feature type="binding site" evidence="28">
    <location>
        <position position="307"/>
    </location>
    <ligand>
        <name>posaconazole</name>
        <dbReference type="ChEBI" id="CHEBI:64355"/>
        <note>inhibitor</note>
    </ligand>
</feature>
<feature type="binding site" evidence="29">
    <location>
        <position position="377"/>
    </location>
    <ligand>
        <name>oteseconazole</name>
        <dbReference type="ChEBI" id="CHEBI:188153"/>
        <note>inhibitor</note>
    </ligand>
</feature>
<feature type="binding site" description="axial binding residue" evidence="28 29 30">
    <location>
        <position position="470"/>
    </location>
    <ligand>
        <name>heme</name>
        <dbReference type="ChEBI" id="CHEBI:30413"/>
    </ligand>
    <ligandPart>
        <name>Fe</name>
        <dbReference type="ChEBI" id="CHEBI:18248"/>
    </ligandPart>
</feature>
<feature type="sequence variant" description="In strain: fluconazole-resistant isolates." evidence="18">
    <original>F</original>
    <variation>L</variation>
    <location>
        <position position="105"/>
    </location>
</feature>
<feature type="sequence variant" description="In strain: azole-resistant isolates." evidence="19">
    <original>G</original>
    <variation>A</variation>
    <location>
        <position position="129"/>
    </location>
</feature>
<feature type="sequence variant" description="In strain: azole-resistant isolates." evidence="4 19">
    <original>Y</original>
    <variation>H</variation>
    <location>
        <position position="132"/>
    </location>
</feature>
<feature type="sequence variant" description="In strain: fluconazole-resistant isolates." evidence="4">
    <original>F</original>
    <variation>L</variation>
    <location>
        <position position="145"/>
    </location>
</feature>
<feature type="sequence variant" description="In strain: fluconazole-resistant isolates." evidence="6">
    <original>A</original>
    <variation>V</variation>
    <location>
        <position position="149"/>
    </location>
</feature>
<feature type="sequence variant" description="In strain: fluconazole-resistant isolates." evidence="6">
    <original>D</original>
    <variation>E</variation>
    <location>
        <position position="153"/>
    </location>
</feature>
<feature type="sequence variant" description="In strain: fluconazole-resistant isolates." evidence="6">
    <original>E</original>
    <variation>Y</variation>
    <location>
        <position position="165"/>
    </location>
</feature>
<feature type="sequence variant" description="In strain: fluconazole-resistant isolates." evidence="18">
    <original>E</original>
    <variation>D</variation>
    <location>
        <position position="266"/>
    </location>
</feature>
<feature type="sequence variant" description="In strain: fluconazole-resistant isolates." evidence="6">
    <original>S</original>
    <variation>F</variation>
    <location>
        <position position="279"/>
    </location>
</feature>
<feature type="sequence variant" description="In strain: fluconazole-resistant isolates." evidence="18">
    <original>K</original>
    <variation>R</variation>
    <location>
        <position position="287"/>
    </location>
</feature>
<feature type="sequence variant" description="In strain: azole-resistant isolates." evidence="19">
    <original>S</original>
    <variation>F</variation>
    <location>
        <position position="405"/>
    </location>
</feature>
<feature type="sequence variant" description="In strain: fluconazole-resistant isolates." evidence="18">
    <original>G</original>
    <variation>E</variation>
    <location>
        <position position="448"/>
    </location>
</feature>
<feature type="sequence variant" description="In strain: fluconazole-resistant isolates." evidence="18">
    <original>G</original>
    <variation>E</variation>
    <location>
        <position position="450"/>
    </location>
</feature>
<feature type="sequence variant" description="In strain: fluconazole-resistant isolates." evidence="6">
    <original>V</original>
    <variation>A</variation>
    <location>
        <position position="452"/>
    </location>
</feature>
<feature type="sequence variant" description="In strain: fluconazole-resistant isolates." evidence="18 19">
    <original>G</original>
    <variation>S</variation>
    <location>
        <position position="464"/>
    </location>
</feature>
<feature type="sequence variant" description="In strain: fluconazole-resistant isolates." evidence="6">
    <original>G</original>
    <variation>S</variation>
    <location>
        <position position="465"/>
    </location>
</feature>
<feature type="sequence variant" description="In strain: Isolate 13; azole-resistant." evidence="7 17 19">
    <original>R</original>
    <variation>K</variation>
    <location>
        <position position="467"/>
    </location>
</feature>
<feature type="sequence variant" description="In strain: fluconazole-resistant isolates." evidence="18">
    <original>V</original>
    <variation>I</variation>
    <location>
        <position position="488"/>
    </location>
</feature>
<feature type="sequence conflict" description="In Ref. 6; AAB08099." evidence="26" ref="6">
    <original>V</original>
    <variation>D</variation>
    <location>
        <position position="19"/>
    </location>
</feature>
<feature type="helix" evidence="33">
    <location>
        <begin position="28"/>
        <end position="40"/>
    </location>
</feature>
<feature type="turn" evidence="32">
    <location>
        <begin position="56"/>
        <end position="58"/>
    </location>
</feature>
<feature type="helix" evidence="32">
    <location>
        <begin position="61"/>
        <end position="66"/>
    </location>
</feature>
<feature type="helix" evidence="32">
    <location>
        <begin position="68"/>
        <end position="79"/>
    </location>
</feature>
<feature type="strand" evidence="32">
    <location>
        <begin position="81"/>
        <end position="87"/>
    </location>
</feature>
<feature type="strand" evidence="32">
    <location>
        <begin position="90"/>
        <end position="95"/>
    </location>
</feature>
<feature type="helix" evidence="32">
    <location>
        <begin position="98"/>
        <end position="105"/>
    </location>
</feature>
<feature type="turn" evidence="32">
    <location>
        <begin position="109"/>
        <end position="111"/>
    </location>
</feature>
<feature type="helix" evidence="32">
    <location>
        <begin position="114"/>
        <end position="126"/>
    </location>
</feature>
<feature type="strand" evidence="31">
    <location>
        <begin position="128"/>
        <end position="130"/>
    </location>
</feature>
<feature type="helix" evidence="32">
    <location>
        <begin position="136"/>
        <end position="147"/>
    </location>
</feature>
<feature type="helix" evidence="32">
    <location>
        <begin position="152"/>
        <end position="172"/>
    </location>
</feature>
<feature type="turn" evidence="32">
    <location>
        <begin position="174"/>
        <end position="176"/>
    </location>
</feature>
<feature type="turn" evidence="32">
    <location>
        <begin position="178"/>
        <end position="180"/>
    </location>
</feature>
<feature type="strand" evidence="32">
    <location>
        <begin position="182"/>
        <end position="187"/>
    </location>
</feature>
<feature type="helix" evidence="32">
    <location>
        <begin position="188"/>
        <end position="205"/>
    </location>
</feature>
<feature type="helix" evidence="32">
    <location>
        <begin position="207"/>
        <end position="212"/>
    </location>
</feature>
<feature type="helix" evidence="32">
    <location>
        <begin position="215"/>
        <end position="225"/>
    </location>
</feature>
<feature type="helix" evidence="32">
    <location>
        <begin position="231"/>
        <end position="234"/>
    </location>
</feature>
<feature type="helix" evidence="32">
    <location>
        <begin position="241"/>
        <end position="266"/>
    </location>
</feature>
<feature type="strand" evidence="33">
    <location>
        <begin position="272"/>
        <end position="274"/>
    </location>
</feature>
<feature type="helix" evidence="32">
    <location>
        <begin position="276"/>
        <end position="282"/>
    </location>
</feature>
<feature type="helix" evidence="32">
    <location>
        <begin position="294"/>
        <end position="325"/>
    </location>
</feature>
<feature type="helix" evidence="32">
    <location>
        <begin position="327"/>
        <end position="344"/>
    </location>
</feature>
<feature type="helix" evidence="32">
    <location>
        <begin position="348"/>
        <end position="350"/>
    </location>
</feature>
<feature type="helix" evidence="32">
    <location>
        <begin position="353"/>
        <end position="356"/>
    </location>
</feature>
<feature type="helix" evidence="32">
    <location>
        <begin position="360"/>
        <end position="372"/>
    </location>
</feature>
<feature type="strand" evidence="32">
    <location>
        <begin position="379"/>
        <end position="383"/>
    </location>
</feature>
<feature type="strand" evidence="31">
    <location>
        <begin position="387"/>
        <end position="389"/>
    </location>
</feature>
<feature type="strand" evidence="32">
    <location>
        <begin position="392"/>
        <end position="396"/>
    </location>
</feature>
<feature type="strand" evidence="32">
    <location>
        <begin position="401"/>
        <end position="404"/>
    </location>
</feature>
<feature type="helix" evidence="32">
    <location>
        <begin position="406"/>
        <end position="410"/>
    </location>
</feature>
<feature type="turn" evidence="32">
    <location>
        <begin position="413"/>
        <end position="415"/>
    </location>
</feature>
<feature type="strand" evidence="32">
    <location>
        <begin position="416"/>
        <end position="418"/>
    </location>
</feature>
<feature type="helix" evidence="32">
    <location>
        <begin position="424"/>
        <end position="428"/>
    </location>
</feature>
<feature type="helix" evidence="32">
    <location>
        <begin position="430"/>
        <end position="434"/>
    </location>
</feature>
<feature type="strand" evidence="31">
    <location>
        <begin position="438"/>
        <end position="440"/>
    </location>
</feature>
<feature type="strand" evidence="32">
    <location>
        <begin position="444"/>
        <end position="454"/>
    </location>
</feature>
<feature type="helix" evidence="32">
    <location>
        <begin position="466"/>
        <end position="468"/>
    </location>
</feature>
<feature type="helix" evidence="32">
    <location>
        <begin position="473"/>
        <end position="490"/>
    </location>
</feature>
<feature type="strand" evidence="32">
    <location>
        <begin position="491"/>
        <end position="494"/>
    </location>
</feature>
<feature type="strand" evidence="32">
    <location>
        <begin position="496"/>
        <end position="499"/>
    </location>
</feature>
<feature type="strand" evidence="32">
    <location>
        <begin position="506"/>
        <end position="509"/>
    </location>
</feature>
<feature type="strand" evidence="32">
    <location>
        <begin position="517"/>
        <end position="522"/>
    </location>
</feature>
<accession>P10613</accession>
<accession>A0A1D8PMZ1</accession>
<accession>Q5A524</accession>
<accession>Q92208</accession>
<keyword id="KW-0002">3D-structure</keyword>
<keyword id="KW-0256">Endoplasmic reticulum</keyword>
<keyword id="KW-0349">Heme</keyword>
<keyword id="KW-0408">Iron</keyword>
<keyword id="KW-0444">Lipid biosynthesis</keyword>
<keyword id="KW-0443">Lipid metabolism</keyword>
<keyword id="KW-0472">Membrane</keyword>
<keyword id="KW-0479">Metal-binding</keyword>
<keyword id="KW-0503">Monooxygenase</keyword>
<keyword id="KW-0560">Oxidoreductase</keyword>
<keyword id="KW-1185">Reference proteome</keyword>
<keyword id="KW-0752">Steroid biosynthesis</keyword>
<keyword id="KW-0753">Steroid metabolism</keyword>
<keyword id="KW-0756">Sterol biosynthesis</keyword>
<keyword id="KW-1207">Sterol metabolism</keyword>
<keyword id="KW-0812">Transmembrane</keyword>
<keyword id="KW-1133">Transmembrane helix</keyword>
<reference key="1">
    <citation type="journal article" date="1989" name="Nucleic Acids Res.">
        <title>Nucleotide sequence of cytochrome P450 L1A1 (lanosterol 14 alpha-demethylase) from Candida albicans.</title>
        <authorList>
            <person name="Lai M.H."/>
            <person name="Kirsch D.R."/>
        </authorList>
    </citation>
    <scope>NUCLEOTIDE SEQUENCE [GENOMIC DNA]</scope>
    <source>
        <strain>SC5314 / ATCC MYA-2876</strain>
    </source>
</reference>
<reference key="2">
    <citation type="submission" date="2008-06" db="EMBL/GenBank/DDBJ databases">
        <title>ERG11 mutations in oral strains of Candida albicans isolated in Sardinia.</title>
        <authorList>
            <person name="Orru G."/>
            <person name="Ciusa M.L."/>
            <person name="Pilia F."/>
            <person name="Taccori F."/>
            <person name="Cosentino S."/>
            <person name="Pisano M.B."/>
            <person name="Meloni M."/>
            <person name="Fadda M.E."/>
        </authorList>
    </citation>
    <scope>NUCLEOTIDE SEQUENCE [GENOMIC DNA]</scope>
    <source>
        <strain>CA100</strain>
        <strain>CA11</strain>
        <strain>CA36</strain>
        <strain>CA95</strain>
    </source>
</reference>
<reference key="3">
    <citation type="journal article" date="2004" name="Proc. Natl. Acad. Sci. U.S.A.">
        <title>The diploid genome sequence of Candida albicans.</title>
        <authorList>
            <person name="Jones T."/>
            <person name="Federspiel N.A."/>
            <person name="Chibana H."/>
            <person name="Dungan J."/>
            <person name="Kalman S."/>
            <person name="Magee B.B."/>
            <person name="Newport G."/>
            <person name="Thorstenson Y.R."/>
            <person name="Agabian N."/>
            <person name="Magee P.T."/>
            <person name="Davis R.W."/>
            <person name="Scherer S."/>
        </authorList>
    </citation>
    <scope>NUCLEOTIDE SEQUENCE [LARGE SCALE GENOMIC DNA]</scope>
    <source>
        <strain>SC5314 / ATCC MYA-2876</strain>
    </source>
</reference>
<reference key="4">
    <citation type="journal article" date="2007" name="Genome Biol.">
        <title>Assembly of the Candida albicans genome into sixteen supercontigs aligned on the eight chromosomes.</title>
        <authorList>
            <person name="van het Hoog M."/>
            <person name="Rast T.J."/>
            <person name="Martchenko M."/>
            <person name="Grindle S."/>
            <person name="Dignard D."/>
            <person name="Hogues H."/>
            <person name="Cuomo C."/>
            <person name="Berriman M."/>
            <person name="Scherer S."/>
            <person name="Magee B.B."/>
            <person name="Whiteway M."/>
            <person name="Chibana H."/>
            <person name="Nantel A."/>
            <person name="Magee P.T."/>
        </authorList>
    </citation>
    <scope>GENOME REANNOTATION</scope>
    <source>
        <strain>SC5314 / ATCC MYA-2876</strain>
    </source>
</reference>
<reference key="5">
    <citation type="journal article" date="2013" name="Genome Biol.">
        <title>Assembly of a phased diploid Candida albicans genome facilitates allele-specific measurements and provides a simple model for repeat and indel structure.</title>
        <authorList>
            <person name="Muzzey D."/>
            <person name="Schwartz K."/>
            <person name="Weissman J.S."/>
            <person name="Sherlock G."/>
        </authorList>
    </citation>
    <scope>NUCLEOTIDE SEQUENCE [LARGE SCALE GENOMIC DNA]</scope>
    <scope>GENOME REANNOTATION</scope>
    <source>
        <strain>SC5314 / ATCC MYA-2876</strain>
    </source>
</reference>
<reference key="6">
    <citation type="journal article" date="1997" name="Antimicrob. Agents Chemother.">
        <title>The presence of an R467K amino acid substitution and loss of allelic variation correlate with an azole-resistant lanosterol 14-alpha demethylase in Candida albicans.</title>
        <authorList>
            <person name="White T.C."/>
        </authorList>
    </citation>
    <scope>NUCLEOTIDE SEQUENCE [GENOMIC DNA] OF 1-48 AND 467-528</scope>
    <scope>VARIANT LYS-467</scope>
    <source>
        <strain>SS</strain>
    </source>
</reference>
<reference key="7">
    <citation type="journal article" date="1988" name="Gene">
        <title>Isolation of the gene for cytochrome P450L1A1 (lanosterol 14 alpha-demethylase) from Candida albicans.</title>
        <authorList>
            <person name="Kirsch D.R."/>
            <person name="Lai M.H."/>
            <person name="O'Sullivan J."/>
        </authorList>
    </citation>
    <scope>FUNCTION</scope>
</reference>
<reference key="8">
    <citation type="journal article" date="1990" name="Biochem. J.">
        <title>Interaction of azole antifungal antibiotics with cytochrome P-450-dependent 14 alpha-sterol demethylase purified from Candida albicans.</title>
        <authorList>
            <person name="Hitchcock C.A."/>
            <person name="Dickinson K."/>
            <person name="Brown S.B."/>
            <person name="Evans E.G."/>
            <person name="Adams D.J."/>
        </authorList>
    </citation>
    <scope>ACTIVITY REGULATION</scope>
</reference>
<reference key="9">
    <citation type="journal article" date="1994" name="J. Mol. Graph.">
        <title>Modeling cytochrome P450 14-alpha demethylase (Candida albicans) from P450cam.</title>
        <authorList>
            <person name="Boscott P.E."/>
            <person name="Grant G.H."/>
        </authorList>
    </citation>
    <scope>3D-STRUCTURE MODELING</scope>
</reference>
<reference key="10">
    <citation type="journal article" date="1995" name="Biochem. Biophys. Res. Commun.">
        <title>Mode of action and resistance to azole antifungals associated with the formation of 14 alpha-methylergosta-8,24(28)-dien-3 beta,6 alpha-diol.</title>
        <authorList>
            <person name="Kelly S.L."/>
            <person name="Lamb D.C."/>
            <person name="Corran A.J."/>
            <person name="Baldwin B.C."/>
            <person name="Kelly D.E."/>
        </authorList>
    </citation>
    <scope>ACTIVITY REGULATION</scope>
</reference>
<reference key="11">
    <citation type="journal article" date="1996" name="J. Biol. Chem.">
        <title>The mechanism of the acyl-carbon bond cleavage reaction catalyzed by recombinant sterol 14 alpha-demethylase of Candida albicans (other names are: lanosterol 14 alpha-demethylase, P-45014DM, and CYP51).</title>
        <authorList>
            <person name="Shyadehi A.Z."/>
            <person name="Lamb D.C."/>
            <person name="Kelly S.L."/>
            <person name="Kelly D.E."/>
            <person name="Schunck W.H."/>
            <person name="Wright J.N."/>
            <person name="Corina D."/>
            <person name="Akhtar M."/>
        </authorList>
    </citation>
    <scope>FUNCTION</scope>
    <scope>CATALYTIC ACTIVITY</scope>
    <scope>PATHWAY</scope>
</reference>
<reference key="12">
    <citation type="journal article" date="1997" name="FEMS Microbiol. Lett.">
        <title>Differential inhibition of Candida albicans CYP51 with azole antifungal stereoisomers.</title>
        <authorList>
            <person name="Lamb D.C."/>
            <person name="Kelly D.E."/>
            <person name="Baldwin B.C."/>
            <person name="Gozzo F."/>
            <person name="Boscott P."/>
            <person name="Richards W.G."/>
            <person name="Kelly S.L."/>
        </authorList>
    </citation>
    <scope>ACTIVITY REGULATION</scope>
</reference>
<reference key="13">
    <citation type="journal article" date="1997" name="FEMS Microbiol. Lett.">
        <title>Molecular analysis of cyp51 from fluconazole-resistant Candida albicans strains.</title>
        <authorList>
            <person name="Loffler J."/>
            <person name="Kelly S.L."/>
            <person name="Hebart H."/>
            <person name="Schumacher U."/>
            <person name="Lass-Florl C."/>
            <person name="Einsele H."/>
        </authorList>
    </citation>
    <scope>VARIANTS LEU-105; ASP-266; ARG-287; GLU-448; GLU-450; SER-464 AND ILE-488</scope>
</reference>
<reference key="14">
    <citation type="journal article" date="1998" name="FEBS Lett.">
        <title>Molecular diversity of sterol 14alpha-demethylase substrates in plants, fungi and humans.</title>
        <authorList>
            <person name="Lamb D.C."/>
            <person name="Kelly D.E."/>
            <person name="Kelly S.L."/>
        </authorList>
    </citation>
    <scope>FUNCTION</scope>
    <scope>CATALYTIC ACTIVITY</scope>
    <scope>BIOPHYSICOCHEMICAL PROPERTIES</scope>
</reference>
<reference key="15">
    <citation type="journal article" date="1998" name="Antimicrob. Agents Chemother.">
        <title>Amino acid substitutions in the cytochrome P-450 lanosterol 14alpha-demethylase (CYP51A1) from azole-resistant Candida albicans clinical isolates contribute to resistance to azole antifungal agents.</title>
        <authorList>
            <person name="Sanglard D."/>
            <person name="Ischer F."/>
            <person name="Koymans L."/>
            <person name="Bille J."/>
        </authorList>
    </citation>
    <scope>VARIANTS ALA-129; HIS-132; PHE-405; SER-464 AND LYS-467</scope>
</reference>
<reference key="16">
    <citation type="journal article" date="1999" name="Antimicrob. Agents Chemother.">
        <title>Formation of azole-resistant Candida albicans by mutation of sterol 14-demethylase P450.</title>
        <authorList>
            <person name="Asai K."/>
            <person name="Tsuchimori N."/>
            <person name="Okonogi K."/>
            <person name="Perfect J.R."/>
            <person name="Gotoh O."/>
            <person name="Yoshida Y."/>
        </authorList>
    </citation>
    <scope>VARFIANTS HIS-132 AND LEU-145</scope>
</reference>
<reference key="17">
    <citation type="journal article" date="1999" name="Biochemistry">
        <title>Generation of a complete, soluble, and catalytically active sterol 14 alpha-demethylase-reductase complex.</title>
        <authorList>
            <person name="Lamb D.C."/>
            <person name="Kelly D.E."/>
            <person name="Venkateswarlu K."/>
            <person name="Manning N.J."/>
            <person name="Bligh H.F."/>
            <person name="Schunck W.H."/>
            <person name="Kelly S.L."/>
        </authorList>
    </citation>
    <scope>FUNCTION</scope>
    <scope>CATALYTIC ACTIVITY</scope>
</reference>
<reference key="18">
    <citation type="journal article" date="1999" name="Microbiology">
        <title>Contribution of mutations in the cytochrome P450 14alpha-demethylase (Erg11p, Cyp51p) to azole resistance in Candida albicans.</title>
        <authorList>
            <person name="Marichal P."/>
            <person name="Koymans L."/>
            <person name="Willemsens S."/>
            <person name="Bellens D."/>
            <person name="Verhasselt P."/>
            <person name="Luyten W."/>
            <person name="Borgers M."/>
            <person name="Ramaekers F.C.S."/>
            <person name="Odds F.C."/>
            <person name="Vanden Bossche H."/>
        </authorList>
    </citation>
    <scope>VARIANTS VAL-149; GLU-153; TYR-165; PHE-279; ALA-452 AND SER-465</scope>
</reference>
<reference key="19">
    <citation type="journal article" date="2000" name="Antimicrob. Agents Chemother.">
        <title>The R467K amino acid substitution in Candida albicans sterol 14alpha-demethylase causes drug resistance through reduced affinity.</title>
        <authorList>
            <person name="Lamb D.C."/>
            <person name="Kelly D.E."/>
            <person name="White T.C."/>
            <person name="Kelly S.L."/>
        </authorList>
    </citation>
    <scope>VARIANT LYS-467</scope>
</reference>
<reference key="20">
    <citation type="journal article" date="2000" name="Antimicrob. Agents Chemother.">
        <title>Upregulation of ERG genes in Candida species by azoles and other sterol biosynthesis inhibitors.</title>
        <authorList>
            <person name="Henry K.W."/>
            <person name="Nickels J.T."/>
            <person name="Edlind T.D."/>
        </authorList>
    </citation>
    <scope>INDUCTION</scope>
</reference>
<reference key="21">
    <citation type="journal article" date="2000" name="J. Med. Chem.">
        <title>A three-dimensional model of lanosterol 14alpha-demethylase of Candida albicans and its interaction with azole antifungals.</title>
        <authorList>
            <person name="Ji H."/>
            <person name="Zhang W."/>
            <person name="Zhou Y."/>
            <person name="Zhang M."/>
            <person name="Zhu J."/>
            <person name="Song Y."/>
            <person name="Lue J."/>
        </authorList>
    </citation>
    <scope>3D-STRUCTURE MODELING</scope>
    <scope>INHIBITOR-BINDING</scope>
</reference>
<reference key="22">
    <citation type="journal article" date="2004" name="Antimicrob. Agents Chemother.">
        <title>The Candida albicans lanosterol 14-alpha-demethylase (ERG11) gene promoter is maximally induced after prolonged growth with antifungal drugs.</title>
        <authorList>
            <person name="Song J.L."/>
            <person name="Harry J.B."/>
            <person name="Eastman R.T."/>
            <person name="Oliver B.G."/>
            <person name="White T.C."/>
        </authorList>
    </citation>
    <scope>INDUCTION</scope>
</reference>
<reference evidence="28 29" key="23">
    <citation type="journal article" date="2017" name="J. Biol. Chem.">
        <title>Structural analyses of Candida albicans sterol 14alpha-demethylase complexed with azole drugs address the molecular basis of azole-mediated inhibition of fungal sterol biosynthesis.</title>
        <authorList>
            <person name="Hargrove T.Y."/>
            <person name="Friggeri L."/>
            <person name="Wawrzak Z."/>
            <person name="Qi A."/>
            <person name="Hoekstra W.J."/>
            <person name="Schotzinger R.J."/>
            <person name="York J.D."/>
            <person name="Guengerich F.P."/>
            <person name="Lepesheva G.I."/>
        </authorList>
    </citation>
    <scope>X-RAY CRYSTALLOGRAPHY (2.00 ANGSTROMS) OF 48-528 IN COMPLEX WITH INHIBITOR AND HEME</scope>
    <scope>FUNCTION</scope>
    <scope>CATALYTIC ACTIVITY</scope>
    <scope>BIOPHYSICOCHEMICAL PROPERTIES</scope>
    <scope>ACTIVITY REGULATION</scope>
    <scope>PATHWAY</scope>
</reference>
<reference evidence="30" key="24">
    <citation type="journal article" date="2018" name="Antimicrob. Agents Chemother.">
        <title>Crystal Structures of Full-Length Lanosterol 14alpha-Demethylases of Prominent Fungal Pathogens Candida albicans and Candida glabrata Provide Tools for Antifungal Discovery.</title>
        <authorList>
            <person name="Keniya M.V."/>
            <person name="Sabherwal M."/>
            <person name="Wilson R.K."/>
            <person name="Woods M.A."/>
            <person name="Sagatova A.A."/>
            <person name="Tyndall J.D.A."/>
            <person name="Monk B.C."/>
        </authorList>
    </citation>
    <scope>X-RAY CRYSTALLOGRAPHY (2.90 ANGSTROMS) IN COMPLEX WITH INHIBITOR AND HEME</scope>
</reference>